<reference key="1">
    <citation type="journal article" date="2007" name="BMC Microbiol.">
        <title>Subtle genetic changes enhance virulence of methicillin resistant and sensitive Staphylococcus aureus.</title>
        <authorList>
            <person name="Highlander S.K."/>
            <person name="Hulten K.G."/>
            <person name="Qin X."/>
            <person name="Jiang H."/>
            <person name="Yerrapragada S."/>
            <person name="Mason E.O. Jr."/>
            <person name="Shang Y."/>
            <person name="Williams T.M."/>
            <person name="Fortunov R.M."/>
            <person name="Liu Y."/>
            <person name="Igboeli O."/>
            <person name="Petrosino J."/>
            <person name="Tirumalai M."/>
            <person name="Uzman A."/>
            <person name="Fox G.E."/>
            <person name="Cardenas A.M."/>
            <person name="Muzny D.M."/>
            <person name="Hemphill L."/>
            <person name="Ding Y."/>
            <person name="Dugan S."/>
            <person name="Blyth P.R."/>
            <person name="Buhay C.J."/>
            <person name="Dinh H.H."/>
            <person name="Hawes A.C."/>
            <person name="Holder M."/>
            <person name="Kovar C.L."/>
            <person name="Lee S.L."/>
            <person name="Liu W."/>
            <person name="Nazareth L.V."/>
            <person name="Wang Q."/>
            <person name="Zhou J."/>
            <person name="Kaplan S.L."/>
            <person name="Weinstock G.M."/>
        </authorList>
    </citation>
    <scope>NUCLEOTIDE SEQUENCE [LARGE SCALE GENOMIC DNA]</scope>
    <source>
        <strain>USA300 / TCH1516</strain>
    </source>
</reference>
<comment type="function">
    <text evidence="1">Transfers the 4'-phosphopantetheine moiety from coenzyme A to a Ser of acyl-carrier-protein.</text>
</comment>
<comment type="catalytic activity">
    <reaction evidence="1">
        <text>apo-[ACP] + CoA = holo-[ACP] + adenosine 3',5'-bisphosphate + H(+)</text>
        <dbReference type="Rhea" id="RHEA:12068"/>
        <dbReference type="Rhea" id="RHEA-COMP:9685"/>
        <dbReference type="Rhea" id="RHEA-COMP:9690"/>
        <dbReference type="ChEBI" id="CHEBI:15378"/>
        <dbReference type="ChEBI" id="CHEBI:29999"/>
        <dbReference type="ChEBI" id="CHEBI:57287"/>
        <dbReference type="ChEBI" id="CHEBI:58343"/>
        <dbReference type="ChEBI" id="CHEBI:64479"/>
        <dbReference type="EC" id="2.7.8.7"/>
    </reaction>
</comment>
<comment type="cofactor">
    <cofactor evidence="1">
        <name>Mg(2+)</name>
        <dbReference type="ChEBI" id="CHEBI:18420"/>
    </cofactor>
</comment>
<comment type="subcellular location">
    <subcellularLocation>
        <location evidence="1">Cytoplasm</location>
    </subcellularLocation>
</comment>
<comment type="similarity">
    <text evidence="1">Belongs to the P-Pant transferase superfamily. AcpS family.</text>
</comment>
<evidence type="ECO:0000255" key="1">
    <source>
        <dbReference type="HAMAP-Rule" id="MF_00101"/>
    </source>
</evidence>
<organism>
    <name type="scientific">Staphylococcus aureus (strain USA300 / TCH1516)</name>
    <dbReference type="NCBI Taxonomy" id="451516"/>
    <lineage>
        <taxon>Bacteria</taxon>
        <taxon>Bacillati</taxon>
        <taxon>Bacillota</taxon>
        <taxon>Bacilli</taxon>
        <taxon>Bacillales</taxon>
        <taxon>Staphylococcaceae</taxon>
        <taxon>Staphylococcus</taxon>
    </lineage>
</organism>
<accession>A8Z4X4</accession>
<name>ACPS_STAAT</name>
<gene>
    <name evidence="1" type="primary">acpS</name>
    <name type="ordered locus">USA300HOU_2066</name>
</gene>
<sequence length="119" mass="13606">MIHGIGVDLIEIDRIQALYSKQPKLVERILTKNEQHKFNNFTHEQRKIEFLAGRFATKEAFSKALGTGLGKHVAFNDIDCYNDELGKPKIDYEGFIVHVSISHTEHYAMSQVVLEKSAF</sequence>
<dbReference type="EC" id="2.7.8.7" evidence="1"/>
<dbReference type="EMBL" id="CP000730">
    <property type="protein sequence ID" value="ABX30063.1"/>
    <property type="molecule type" value="Genomic_DNA"/>
</dbReference>
<dbReference type="RefSeq" id="WP_000581200.1">
    <property type="nucleotide sequence ID" value="NC_010079.1"/>
</dbReference>
<dbReference type="BMRB" id="A8Z4X4"/>
<dbReference type="SMR" id="A8Z4X4"/>
<dbReference type="KEGG" id="sax:USA300HOU_2066"/>
<dbReference type="HOGENOM" id="CLU_089696_1_2_9"/>
<dbReference type="GO" id="GO:0005737">
    <property type="term" value="C:cytoplasm"/>
    <property type="evidence" value="ECO:0007669"/>
    <property type="project" value="UniProtKB-SubCell"/>
</dbReference>
<dbReference type="GO" id="GO:0008897">
    <property type="term" value="F:holo-[acyl-carrier-protein] synthase activity"/>
    <property type="evidence" value="ECO:0007669"/>
    <property type="project" value="UniProtKB-UniRule"/>
</dbReference>
<dbReference type="GO" id="GO:0000287">
    <property type="term" value="F:magnesium ion binding"/>
    <property type="evidence" value="ECO:0007669"/>
    <property type="project" value="UniProtKB-UniRule"/>
</dbReference>
<dbReference type="GO" id="GO:0006633">
    <property type="term" value="P:fatty acid biosynthetic process"/>
    <property type="evidence" value="ECO:0007669"/>
    <property type="project" value="UniProtKB-UniRule"/>
</dbReference>
<dbReference type="Gene3D" id="3.90.470.20">
    <property type="entry name" value="4'-phosphopantetheinyl transferase domain"/>
    <property type="match status" value="1"/>
</dbReference>
<dbReference type="HAMAP" id="MF_00101">
    <property type="entry name" value="AcpS"/>
    <property type="match status" value="1"/>
</dbReference>
<dbReference type="InterPro" id="IPR008278">
    <property type="entry name" value="4-PPantetheinyl_Trfase_dom"/>
</dbReference>
<dbReference type="InterPro" id="IPR037143">
    <property type="entry name" value="4-PPantetheinyl_Trfase_dom_sf"/>
</dbReference>
<dbReference type="InterPro" id="IPR002582">
    <property type="entry name" value="ACPS"/>
</dbReference>
<dbReference type="InterPro" id="IPR004568">
    <property type="entry name" value="Ppantetheine-prot_Trfase_dom"/>
</dbReference>
<dbReference type="NCBIfam" id="TIGR00516">
    <property type="entry name" value="acpS"/>
    <property type="match status" value="1"/>
</dbReference>
<dbReference type="NCBIfam" id="TIGR00556">
    <property type="entry name" value="pantethn_trn"/>
    <property type="match status" value="1"/>
</dbReference>
<dbReference type="Pfam" id="PF01648">
    <property type="entry name" value="ACPS"/>
    <property type="match status" value="1"/>
</dbReference>
<dbReference type="SUPFAM" id="SSF56214">
    <property type="entry name" value="4'-phosphopantetheinyl transferase"/>
    <property type="match status" value="1"/>
</dbReference>
<keyword id="KW-0963">Cytoplasm</keyword>
<keyword id="KW-0275">Fatty acid biosynthesis</keyword>
<keyword id="KW-0276">Fatty acid metabolism</keyword>
<keyword id="KW-0444">Lipid biosynthesis</keyword>
<keyword id="KW-0443">Lipid metabolism</keyword>
<keyword id="KW-0460">Magnesium</keyword>
<keyword id="KW-0479">Metal-binding</keyword>
<keyword id="KW-0808">Transferase</keyword>
<proteinExistence type="inferred from homology"/>
<protein>
    <recommendedName>
        <fullName evidence="1">Holo-[acyl-carrier-protein] synthase</fullName>
        <shortName evidence="1">Holo-ACP synthase</shortName>
        <ecNumber evidence="1">2.7.8.7</ecNumber>
    </recommendedName>
    <alternativeName>
        <fullName evidence="1">4'-phosphopantetheinyl transferase AcpS</fullName>
    </alternativeName>
</protein>
<feature type="chain" id="PRO_1000075666" description="Holo-[acyl-carrier-protein] synthase">
    <location>
        <begin position="1"/>
        <end position="119"/>
    </location>
</feature>
<feature type="binding site" evidence="1">
    <location>
        <position position="8"/>
    </location>
    <ligand>
        <name>Mg(2+)</name>
        <dbReference type="ChEBI" id="CHEBI:18420"/>
    </ligand>
</feature>
<feature type="binding site" evidence="1">
    <location>
        <position position="59"/>
    </location>
    <ligand>
        <name>Mg(2+)</name>
        <dbReference type="ChEBI" id="CHEBI:18420"/>
    </ligand>
</feature>